<keyword id="KW-0007">Acetylation</keyword>
<keyword id="KW-0025">Alternative splicing</keyword>
<keyword id="KW-0053">Apoptosis</keyword>
<keyword id="KW-0175">Coiled coil</keyword>
<keyword id="KW-0963">Cytoplasm</keyword>
<keyword id="KW-0479">Metal-binding</keyword>
<keyword id="KW-0539">Nucleus</keyword>
<keyword id="KW-0597">Phosphoprotein</keyword>
<keyword id="KW-1267">Proteomics identification</keyword>
<keyword id="KW-1185">Reference proteome</keyword>
<keyword id="KW-0808">Transferase</keyword>
<keyword id="KW-0833">Ubl conjugation pathway</keyword>
<keyword id="KW-0862">Zinc</keyword>
<keyword id="KW-0863">Zinc-finger</keyword>
<name>TRI35_HUMAN</name>
<gene>
    <name type="primary">TRIM35</name>
    <name type="synonym">HLS5</name>
    <name type="synonym">KIAA1098</name>
</gene>
<feature type="chain" id="PRO_0000056250" description="E3 ubiquitin-protein ligase TRIM35">
    <location>
        <begin position="1"/>
        <end position="493"/>
    </location>
</feature>
<feature type="domain" description="B30.2/SPRY" evidence="5">
    <location>
        <begin position="284"/>
        <end position="487"/>
    </location>
</feature>
<feature type="zinc finger region" description="RING-type" evidence="4">
    <location>
        <begin position="21"/>
        <end position="61"/>
    </location>
</feature>
<feature type="zinc finger region" description="B box-type" evidence="3">
    <location>
        <begin position="96"/>
        <end position="137"/>
    </location>
</feature>
<feature type="coiled-coil region" evidence="2">
    <location>
        <begin position="210"/>
        <end position="251"/>
    </location>
</feature>
<feature type="binding site" evidence="3">
    <location>
        <position position="101"/>
    </location>
    <ligand>
        <name>Zn(2+)</name>
        <dbReference type="ChEBI" id="CHEBI:29105"/>
    </ligand>
</feature>
<feature type="binding site" evidence="3">
    <location>
        <position position="104"/>
    </location>
    <ligand>
        <name>Zn(2+)</name>
        <dbReference type="ChEBI" id="CHEBI:29105"/>
    </ligand>
</feature>
<feature type="binding site" evidence="3">
    <location>
        <position position="123"/>
    </location>
    <ligand>
        <name>Zn(2+)</name>
        <dbReference type="ChEBI" id="CHEBI:29105"/>
    </ligand>
</feature>
<feature type="binding site" evidence="3">
    <location>
        <position position="129"/>
    </location>
    <ligand>
        <name>Zn(2+)</name>
        <dbReference type="ChEBI" id="CHEBI:29105"/>
    </ligand>
</feature>
<feature type="modified residue" description="N-acetylmethionine" evidence="12">
    <location>
        <position position="1"/>
    </location>
</feature>
<feature type="modified residue" description="Phosphoserine" evidence="12 13">
    <location>
        <position position="4"/>
    </location>
</feature>
<feature type="modified residue" description="Phosphoserine" evidence="12">
    <location>
        <position position="8"/>
    </location>
</feature>
<feature type="splice variant" id="VSP_012061" description="In isoform 2." evidence="9">
    <original>AKCRNMEHALREKAKAFWAMRRSYEAIAKHNQVEAAWLEGRIRQEFDKLREFLRVEEQAIL</original>
    <variation>VRSLIAEERRNFLPTHQWIVTKTRLQTSSPNLQSRRQGQVQEHGACTAGEGQGLLGHAALL</variation>
    <location>
        <begin position="146"/>
        <end position="206"/>
    </location>
</feature>
<accession>Q9UPQ4</accession>
<accession>Q86XQ0</accession>
<accession>Q8WVA4</accession>
<sequence>MERSPDVSPGPSRSFKEELLCAVCYDPFRDAVTLRCGHNFCRGCVSRCWEVQVSPTCPVCKDRASPADLRTNHTLNNLVEKLLREEAEGARWTSYRFSRVCRLHRGQLSLFCLEDKELLCCSCQADPRHQGHRVQPVKDTAHDFRAKCRNMEHALREKAKAFWAMRRSYEAIAKHNQVEAAWLEGRIRQEFDKLREFLRVEEQAILDAMAEETRQKQLLADEKMKQLTEETEVLAHEIERLQMEMKEDDVSFLMKHKSRKRRLFCTMEPEPVQPGMLIDVCKYLGSLQYRVWKKMLASVESVPFSFDPNTAAGWLSVSDDLTSVTNHGYRVQVENPERFSSAPCLLGSRVFSQGSHAWEVALGGLQSWRVGVVRVRQDSGAEGHSHSCYHDTRSGFWYVCRTQGVEGDHCVTSDPATSPLVLAIPRRLRVELECEEGELSFYDAERHCHLYTFHARFGEVRPYFYLGGARGAGPPEPLRICPLHISVKEELDG</sequence>
<evidence type="ECO:0000250" key="1"/>
<evidence type="ECO:0000255" key="2"/>
<evidence type="ECO:0000255" key="3">
    <source>
        <dbReference type="PROSITE-ProRule" id="PRU00024"/>
    </source>
</evidence>
<evidence type="ECO:0000255" key="4">
    <source>
        <dbReference type="PROSITE-ProRule" id="PRU00175"/>
    </source>
</evidence>
<evidence type="ECO:0000255" key="5">
    <source>
        <dbReference type="PROSITE-ProRule" id="PRU00548"/>
    </source>
</evidence>
<evidence type="ECO:0000269" key="6">
    <source>
    </source>
</evidence>
<evidence type="ECO:0000269" key="7">
    <source>
    </source>
</evidence>
<evidence type="ECO:0000269" key="8">
    <source>
    </source>
</evidence>
<evidence type="ECO:0000303" key="9">
    <source>
    </source>
</evidence>
<evidence type="ECO:0000303" key="10">
    <source>
    </source>
</evidence>
<evidence type="ECO:0000305" key="11"/>
<evidence type="ECO:0007744" key="12">
    <source>
    </source>
</evidence>
<evidence type="ECO:0007744" key="13">
    <source>
    </source>
</evidence>
<organism>
    <name type="scientific">Homo sapiens</name>
    <name type="common">Human</name>
    <dbReference type="NCBI Taxonomy" id="9606"/>
    <lineage>
        <taxon>Eukaryota</taxon>
        <taxon>Metazoa</taxon>
        <taxon>Chordata</taxon>
        <taxon>Craniata</taxon>
        <taxon>Vertebrata</taxon>
        <taxon>Euteleostomi</taxon>
        <taxon>Mammalia</taxon>
        <taxon>Eutheria</taxon>
        <taxon>Euarchontoglires</taxon>
        <taxon>Primates</taxon>
        <taxon>Haplorrhini</taxon>
        <taxon>Catarrhini</taxon>
        <taxon>Hominidae</taxon>
        <taxon>Homo</taxon>
    </lineage>
</organism>
<dbReference type="EC" id="2.3.2.27"/>
<dbReference type="EMBL" id="AF492463">
    <property type="protein sequence ID" value="AAO85480.1"/>
    <property type="molecule type" value="mRNA"/>
</dbReference>
<dbReference type="EMBL" id="AB029021">
    <property type="protein sequence ID" value="BAA83050.1"/>
    <property type="status" value="ALT_INIT"/>
    <property type="molecule type" value="mRNA"/>
</dbReference>
<dbReference type="EMBL" id="BC018337">
    <property type="protein sequence ID" value="AAH18337.1"/>
    <property type="molecule type" value="mRNA"/>
</dbReference>
<dbReference type="EMBL" id="BC069226">
    <property type="protein sequence ID" value="AAH69226.1"/>
    <property type="molecule type" value="mRNA"/>
</dbReference>
<dbReference type="CCDS" id="CCDS6056.2">
    <molecule id="Q9UPQ4-1"/>
</dbReference>
<dbReference type="RefSeq" id="NP_741983.2">
    <molecule id="Q9UPQ4-1"/>
    <property type="nucleotide sequence ID" value="NM_171982.5"/>
</dbReference>
<dbReference type="SMR" id="Q9UPQ4"/>
<dbReference type="BioGRID" id="116716">
    <property type="interactions" value="105"/>
</dbReference>
<dbReference type="FunCoup" id="Q9UPQ4">
    <property type="interactions" value="2118"/>
</dbReference>
<dbReference type="IntAct" id="Q9UPQ4">
    <property type="interactions" value="96"/>
</dbReference>
<dbReference type="STRING" id="9606.ENSP00000301924"/>
<dbReference type="GlyGen" id="Q9UPQ4">
    <property type="glycosylation" value="1 site, 1 O-linked glycan (1 site)"/>
</dbReference>
<dbReference type="iPTMnet" id="Q9UPQ4"/>
<dbReference type="PhosphoSitePlus" id="Q9UPQ4"/>
<dbReference type="BioMuta" id="TRIM35"/>
<dbReference type="DMDM" id="56404980"/>
<dbReference type="jPOST" id="Q9UPQ4"/>
<dbReference type="MassIVE" id="Q9UPQ4"/>
<dbReference type="PaxDb" id="9606-ENSP00000301924"/>
<dbReference type="PeptideAtlas" id="Q9UPQ4"/>
<dbReference type="ProteomicsDB" id="85414">
    <molecule id="Q9UPQ4-1"/>
</dbReference>
<dbReference type="ProteomicsDB" id="85415">
    <molecule id="Q9UPQ4-2"/>
</dbReference>
<dbReference type="Antibodypedia" id="10095">
    <property type="antibodies" value="296 antibodies from 32 providers"/>
</dbReference>
<dbReference type="DNASU" id="23087"/>
<dbReference type="Ensembl" id="ENST00000305364.9">
    <molecule id="Q9UPQ4-1"/>
    <property type="protein sequence ID" value="ENSP00000301924.4"/>
    <property type="gene ID" value="ENSG00000104228.13"/>
</dbReference>
<dbReference type="GeneID" id="23087"/>
<dbReference type="KEGG" id="hsa:23087"/>
<dbReference type="MANE-Select" id="ENST00000305364.9">
    <property type="protein sequence ID" value="ENSP00000301924.4"/>
    <property type="RefSeq nucleotide sequence ID" value="NM_171982.5"/>
    <property type="RefSeq protein sequence ID" value="NP_741983.2"/>
</dbReference>
<dbReference type="UCSC" id="uc003xfl.2">
    <molecule id="Q9UPQ4-1"/>
    <property type="organism name" value="human"/>
</dbReference>
<dbReference type="AGR" id="HGNC:16285"/>
<dbReference type="CTD" id="23087"/>
<dbReference type="DisGeNET" id="23087"/>
<dbReference type="GeneCards" id="TRIM35"/>
<dbReference type="HGNC" id="HGNC:16285">
    <property type="gene designation" value="TRIM35"/>
</dbReference>
<dbReference type="HPA" id="ENSG00000104228">
    <property type="expression patterns" value="Low tissue specificity"/>
</dbReference>
<dbReference type="MIM" id="617007">
    <property type="type" value="gene"/>
</dbReference>
<dbReference type="neXtProt" id="NX_Q9UPQ4"/>
<dbReference type="OpenTargets" id="ENSG00000104228"/>
<dbReference type="PharmGKB" id="PA38115"/>
<dbReference type="VEuPathDB" id="HostDB:ENSG00000104228"/>
<dbReference type="eggNOG" id="KOG2177">
    <property type="taxonomic scope" value="Eukaryota"/>
</dbReference>
<dbReference type="GeneTree" id="ENSGT00940000160868"/>
<dbReference type="HOGENOM" id="CLU_013137_0_3_1"/>
<dbReference type="InParanoid" id="Q9UPQ4"/>
<dbReference type="OMA" id="CYDPFRE"/>
<dbReference type="OrthoDB" id="6105938at2759"/>
<dbReference type="PAN-GO" id="Q9UPQ4">
    <property type="GO annotations" value="5 GO annotations based on evolutionary models"/>
</dbReference>
<dbReference type="PhylomeDB" id="Q9UPQ4"/>
<dbReference type="TreeFam" id="TF334286"/>
<dbReference type="PathwayCommons" id="Q9UPQ4"/>
<dbReference type="Reactome" id="R-HSA-877300">
    <property type="pathway name" value="Interferon gamma signaling"/>
</dbReference>
<dbReference type="SignaLink" id="Q9UPQ4"/>
<dbReference type="SIGNOR" id="Q9UPQ4"/>
<dbReference type="UniPathway" id="UPA00143"/>
<dbReference type="BioGRID-ORCS" id="23087">
    <property type="hits" value="21 hits in 1204 CRISPR screens"/>
</dbReference>
<dbReference type="ChiTaRS" id="TRIM35">
    <property type="organism name" value="human"/>
</dbReference>
<dbReference type="GenomeRNAi" id="23087"/>
<dbReference type="Pharos" id="Q9UPQ4">
    <property type="development level" value="Tbio"/>
</dbReference>
<dbReference type="PRO" id="PR:Q9UPQ4"/>
<dbReference type="Proteomes" id="UP000005640">
    <property type="component" value="Chromosome 8"/>
</dbReference>
<dbReference type="RNAct" id="Q9UPQ4">
    <property type="molecule type" value="protein"/>
</dbReference>
<dbReference type="Bgee" id="ENSG00000104228">
    <property type="expression patterns" value="Expressed in calcaneal tendon and 148 other cell types or tissues"/>
</dbReference>
<dbReference type="ExpressionAtlas" id="Q9UPQ4">
    <property type="expression patterns" value="baseline and differential"/>
</dbReference>
<dbReference type="GO" id="GO:0005737">
    <property type="term" value="C:cytoplasm"/>
    <property type="evidence" value="ECO:0000250"/>
    <property type="project" value="UniProtKB"/>
</dbReference>
<dbReference type="GO" id="GO:0005634">
    <property type="term" value="C:nucleus"/>
    <property type="evidence" value="ECO:0000250"/>
    <property type="project" value="UniProtKB"/>
</dbReference>
<dbReference type="GO" id="GO:0061630">
    <property type="term" value="F:ubiquitin protein ligase activity"/>
    <property type="evidence" value="ECO:0000318"/>
    <property type="project" value="GO_Central"/>
</dbReference>
<dbReference type="GO" id="GO:0008270">
    <property type="term" value="F:zinc ion binding"/>
    <property type="evidence" value="ECO:0007669"/>
    <property type="project" value="UniProtKB-KW"/>
</dbReference>
<dbReference type="GO" id="GO:0006915">
    <property type="term" value="P:apoptotic process"/>
    <property type="evidence" value="ECO:0007669"/>
    <property type="project" value="UniProtKB-KW"/>
</dbReference>
<dbReference type="GO" id="GO:0045087">
    <property type="term" value="P:innate immune response"/>
    <property type="evidence" value="ECO:0000314"/>
    <property type="project" value="UniProtKB"/>
</dbReference>
<dbReference type="GO" id="GO:0045930">
    <property type="term" value="P:negative regulation of mitotic cell cycle"/>
    <property type="evidence" value="ECO:0000314"/>
    <property type="project" value="UniProtKB"/>
</dbReference>
<dbReference type="GO" id="GO:0043065">
    <property type="term" value="P:positive regulation of apoptotic process"/>
    <property type="evidence" value="ECO:0000314"/>
    <property type="project" value="UniProtKB"/>
</dbReference>
<dbReference type="GO" id="GO:0016567">
    <property type="term" value="P:protein ubiquitination"/>
    <property type="evidence" value="ECO:0007669"/>
    <property type="project" value="UniProtKB-UniPathway"/>
</dbReference>
<dbReference type="GO" id="GO:0044790">
    <property type="term" value="P:suppression of viral release by host"/>
    <property type="evidence" value="ECO:0000314"/>
    <property type="project" value="UniProtKB"/>
</dbReference>
<dbReference type="CDD" id="cd16599">
    <property type="entry name" value="RING-HC_TRIM35_C-IV"/>
    <property type="match status" value="1"/>
</dbReference>
<dbReference type="CDD" id="cd12893">
    <property type="entry name" value="SPRY_PRY_TRIM35"/>
    <property type="match status" value="1"/>
</dbReference>
<dbReference type="FunFam" id="2.60.120.920:FF:000036">
    <property type="entry name" value="Tripartite motif-containing protein 35"/>
    <property type="match status" value="1"/>
</dbReference>
<dbReference type="FunFam" id="3.30.160.60:FF:001525">
    <property type="entry name" value="Tripartite motif-containing protein 35"/>
    <property type="match status" value="1"/>
</dbReference>
<dbReference type="FunFam" id="3.30.40.10:FF:000373">
    <property type="entry name" value="Tripartite motif-containing protein 35"/>
    <property type="match status" value="1"/>
</dbReference>
<dbReference type="Gene3D" id="2.60.120.920">
    <property type="match status" value="1"/>
</dbReference>
<dbReference type="Gene3D" id="3.30.160.60">
    <property type="entry name" value="Classic Zinc Finger"/>
    <property type="match status" value="1"/>
</dbReference>
<dbReference type="Gene3D" id="3.30.40.10">
    <property type="entry name" value="Zinc/RING finger domain, C3HC4 (zinc finger)"/>
    <property type="match status" value="1"/>
</dbReference>
<dbReference type="InterPro" id="IPR001870">
    <property type="entry name" value="B30.2/SPRY"/>
</dbReference>
<dbReference type="InterPro" id="IPR043136">
    <property type="entry name" value="B30.2/SPRY_sf"/>
</dbReference>
<dbReference type="InterPro" id="IPR003879">
    <property type="entry name" value="Butyrophylin_SPRY"/>
</dbReference>
<dbReference type="InterPro" id="IPR013320">
    <property type="entry name" value="ConA-like_dom_sf"/>
</dbReference>
<dbReference type="InterPro" id="IPR006574">
    <property type="entry name" value="PRY"/>
</dbReference>
<dbReference type="InterPro" id="IPR003877">
    <property type="entry name" value="SPRY_dom"/>
</dbReference>
<dbReference type="InterPro" id="IPR050143">
    <property type="entry name" value="TRIM/RBCC"/>
</dbReference>
<dbReference type="InterPro" id="IPR027370">
    <property type="entry name" value="Znf-RING_euk"/>
</dbReference>
<dbReference type="InterPro" id="IPR000315">
    <property type="entry name" value="Znf_B-box"/>
</dbReference>
<dbReference type="InterPro" id="IPR001841">
    <property type="entry name" value="Znf_RING"/>
</dbReference>
<dbReference type="InterPro" id="IPR013083">
    <property type="entry name" value="Znf_RING/FYVE/PHD"/>
</dbReference>
<dbReference type="InterPro" id="IPR017907">
    <property type="entry name" value="Znf_RING_CS"/>
</dbReference>
<dbReference type="PANTHER" id="PTHR24103">
    <property type="entry name" value="E3 UBIQUITIN-PROTEIN LIGASE TRIM"/>
    <property type="match status" value="1"/>
</dbReference>
<dbReference type="Pfam" id="PF13765">
    <property type="entry name" value="PRY"/>
    <property type="match status" value="1"/>
</dbReference>
<dbReference type="Pfam" id="PF00622">
    <property type="entry name" value="SPRY"/>
    <property type="match status" value="1"/>
</dbReference>
<dbReference type="Pfam" id="PF00643">
    <property type="entry name" value="zf-B_box"/>
    <property type="match status" value="1"/>
</dbReference>
<dbReference type="Pfam" id="PF13445">
    <property type="entry name" value="zf-RING_UBOX"/>
    <property type="match status" value="1"/>
</dbReference>
<dbReference type="PRINTS" id="PR01407">
    <property type="entry name" value="BUTYPHLNCDUF"/>
</dbReference>
<dbReference type="SMART" id="SM00336">
    <property type="entry name" value="BBOX"/>
    <property type="match status" value="1"/>
</dbReference>
<dbReference type="SMART" id="SM00589">
    <property type="entry name" value="PRY"/>
    <property type="match status" value="1"/>
</dbReference>
<dbReference type="SMART" id="SM00184">
    <property type="entry name" value="RING"/>
    <property type="match status" value="1"/>
</dbReference>
<dbReference type="SMART" id="SM00449">
    <property type="entry name" value="SPRY"/>
    <property type="match status" value="1"/>
</dbReference>
<dbReference type="SUPFAM" id="SSF57845">
    <property type="entry name" value="B-box zinc-binding domain"/>
    <property type="match status" value="1"/>
</dbReference>
<dbReference type="SUPFAM" id="SSF49899">
    <property type="entry name" value="Concanavalin A-like lectins/glucanases"/>
    <property type="match status" value="1"/>
</dbReference>
<dbReference type="SUPFAM" id="SSF57850">
    <property type="entry name" value="RING/U-box"/>
    <property type="match status" value="1"/>
</dbReference>
<dbReference type="PROSITE" id="PS50188">
    <property type="entry name" value="B302_SPRY"/>
    <property type="match status" value="1"/>
</dbReference>
<dbReference type="PROSITE" id="PS50119">
    <property type="entry name" value="ZF_BBOX"/>
    <property type="match status" value="1"/>
</dbReference>
<dbReference type="PROSITE" id="PS00518">
    <property type="entry name" value="ZF_RING_1"/>
    <property type="match status" value="1"/>
</dbReference>
<dbReference type="PROSITE" id="PS50089">
    <property type="entry name" value="ZF_RING_2"/>
    <property type="match status" value="1"/>
</dbReference>
<protein>
    <recommendedName>
        <fullName evidence="10">E3 ubiquitin-protein ligase TRIM35</fullName>
        <ecNumber>2.3.2.27</ecNumber>
    </recommendedName>
    <alternativeName>
        <fullName>Hemopoietic lineage switch protein 5</fullName>
    </alternativeName>
</protein>
<comment type="function">
    <text evidence="6 7 8">E3 ubiquitin-protein ligase that participates in multiple biological processes including cell death, glucose metabolism, and in particular, the innate immune response. Mediates 'Lys-63'-linked polyubiquitination of TRAF3 thereby promoting type I interferon production via RIG-I signaling pathway (PubMed:32562145). Can also catalyze 'Lys-48'-linked polyubiquitination and proteasomal degradation of viral proteins such as influenza virus PB2 (PubMed:32562145). Acts as a negative feedback regulator of TLR7- and TLR9-triggered signaling. Mechanistically, promotes the 'Lys-48'-linked ubiquitination of IRF7 and induces its degradation via a proteasome-dependent pathway (PubMed:25907537). Reduces FGFR1-dependent tyrosine phosphorylation of PKM, inhibiting PKM-dependent lactate production, glucose metabolism, and cell growth (PubMed:25263439).</text>
</comment>
<comment type="catalytic activity">
    <reaction>
        <text>S-ubiquitinyl-[E2 ubiquitin-conjugating enzyme]-L-cysteine + [acceptor protein]-L-lysine = [E2 ubiquitin-conjugating enzyme]-L-cysteine + N(6)-ubiquitinyl-[acceptor protein]-L-lysine.</text>
        <dbReference type="EC" id="2.3.2.27"/>
    </reaction>
</comment>
<comment type="pathway">
    <text>Protein modification; protein ubiquitination.</text>
</comment>
<comment type="subunit">
    <text evidence="6 7 8">Interacts with PKM isoform M2, but not isoform M1; this interaction may compete with that between PKM and FGFR1, and hence reduces FGFR1-dependent tyrosine phosphorylation of PKM (PubMed:25263439). Interacts with IRF7; this interaction promotes IRF7 proteasomal degradation (PubMed:25907537). Interacts with TRAF3; this interaction promotes TRAF3 activation (PubMed:32562145).</text>
</comment>
<comment type="interaction">
    <interactant intactId="EBI-17716262">
        <id>Q9UPQ4-2</id>
    </interactant>
    <interactant intactId="EBI-10827839">
        <id>Q15848</id>
        <label>ADIPOQ</label>
    </interactant>
    <organismsDiffer>false</organismsDiffer>
    <experiments>3</experiments>
</comment>
<comment type="interaction">
    <interactant intactId="EBI-17716262">
        <id>Q9UPQ4-2</id>
    </interactant>
    <interactant intactId="EBI-11524452">
        <id>Q8N9N5-2</id>
        <label>BANP</label>
    </interactant>
    <organismsDiffer>false</organismsDiffer>
    <experiments>3</experiments>
</comment>
<comment type="interaction">
    <interactant intactId="EBI-17716262">
        <id>Q9UPQ4-2</id>
    </interactant>
    <interactant intactId="EBI-12011224">
        <id>Q9NPB3</id>
        <label>CABP2</label>
    </interactant>
    <organismsDiffer>false</organismsDiffer>
    <experiments>3</experiments>
</comment>
<comment type="interaction">
    <interactant intactId="EBI-17716262">
        <id>Q9UPQ4-2</id>
    </interactant>
    <interactant intactId="EBI-747133">
        <id>P27658</id>
        <label>COL8A1</label>
    </interactant>
    <organismsDiffer>false</organismsDiffer>
    <experiments>3</experiments>
</comment>
<comment type="interaction">
    <interactant intactId="EBI-17716262">
        <id>Q9UPQ4-2</id>
    </interactant>
    <interactant intactId="EBI-740376">
        <id>Q86UW9</id>
        <label>DTX2</label>
    </interactant>
    <organismsDiffer>false</organismsDiffer>
    <experiments>3</experiments>
</comment>
<comment type="interaction">
    <interactant intactId="EBI-17716262">
        <id>Q9UPQ4-2</id>
    </interactant>
    <interactant intactId="EBI-744099">
        <id>Q9H0I2</id>
        <label>ENKD1</label>
    </interactant>
    <organismsDiffer>false</organismsDiffer>
    <experiments>3</experiments>
</comment>
<comment type="interaction">
    <interactant intactId="EBI-17716262">
        <id>Q9UPQ4-2</id>
    </interactant>
    <interactant intactId="EBI-348399">
        <id>P22607</id>
        <label>FGFR3</label>
    </interactant>
    <organismsDiffer>false</organismsDiffer>
    <experiments>3</experiments>
</comment>
<comment type="interaction">
    <interactant intactId="EBI-17716262">
        <id>Q9UPQ4-2</id>
    </interactant>
    <interactant intactId="EBI-10242151">
        <id>Q53EP0-3</id>
        <label>FNDC3B</label>
    </interactant>
    <organismsDiffer>false</organismsDiffer>
    <experiments>3</experiments>
</comment>
<comment type="interaction">
    <interactant intactId="EBI-17716262">
        <id>Q9UPQ4-2</id>
    </interactant>
    <interactant intactId="EBI-744239">
        <id>Q14749</id>
        <label>GNMT</label>
    </interactant>
    <organismsDiffer>false</organismsDiffer>
    <experiments>3</experiments>
</comment>
<comment type="interaction">
    <interactant intactId="EBI-17716262">
        <id>Q9UPQ4-2</id>
    </interactant>
    <interactant intactId="EBI-8285963">
        <id>Q14957</id>
        <label>GRIN2C</label>
    </interactant>
    <organismsDiffer>false</organismsDiffer>
    <experiments>3</experiments>
</comment>
<comment type="interaction">
    <interactant intactId="EBI-17716262">
        <id>Q9UPQ4-2</id>
    </interactant>
    <interactant intactId="EBI-747754">
        <id>P28799</id>
        <label>GRN</label>
    </interactant>
    <organismsDiffer>false</organismsDiffer>
    <experiments>3</experiments>
</comment>
<comment type="interaction">
    <interactant intactId="EBI-17716262">
        <id>Q9UPQ4-2</id>
    </interactant>
    <interactant intactId="EBI-1642515">
        <id>I6L957</id>
        <label>HNRNPA2B1</label>
    </interactant>
    <organismsDiffer>false</organismsDiffer>
    <experiments>3</experiments>
</comment>
<comment type="interaction">
    <interactant intactId="EBI-17716262">
        <id>Q9UPQ4-2</id>
    </interactant>
    <interactant intactId="EBI-466029">
        <id>P42858</id>
        <label>HTT</label>
    </interactant>
    <organismsDiffer>false</organismsDiffer>
    <experiments>9</experiments>
</comment>
<comment type="interaction">
    <interactant intactId="EBI-17716262">
        <id>Q9UPQ4-2</id>
    </interactant>
    <interactant intactId="EBI-11955401">
        <id>Q86VF2-5</id>
        <label>IGFN1</label>
    </interactant>
    <organismsDiffer>false</organismsDiffer>
    <experiments>3</experiments>
</comment>
<comment type="interaction">
    <interactant intactId="EBI-17716262">
        <id>Q9UPQ4-2</id>
    </interactant>
    <interactant intactId="EBI-2556193">
        <id>Q63ZY3</id>
        <label>KANK2</label>
    </interactant>
    <organismsDiffer>false</organismsDiffer>
    <experiments>3</experiments>
</comment>
<comment type="interaction">
    <interactant intactId="EBI-17716262">
        <id>Q9UPQ4-2</id>
    </interactant>
    <interactant intactId="EBI-10975473">
        <id>O60333-2</id>
        <label>KIF1B</label>
    </interactant>
    <organismsDiffer>false</organismsDiffer>
    <experiments>3</experiments>
</comment>
<comment type="interaction">
    <interactant intactId="EBI-17716262">
        <id>Q9UPQ4-2</id>
    </interactant>
    <interactant intactId="EBI-13287659">
        <id>P06239-3</id>
        <label>LCK</label>
    </interactant>
    <organismsDiffer>false</organismsDiffer>
    <experiments>3</experiments>
</comment>
<comment type="interaction">
    <interactant intactId="EBI-17716262">
        <id>Q9UPQ4-2</id>
    </interactant>
    <interactant intactId="EBI-8639312">
        <id>P25800</id>
        <label>LMO1</label>
    </interactant>
    <organismsDiffer>false</organismsDiffer>
    <experiments>3</experiments>
</comment>
<comment type="interaction">
    <interactant intactId="EBI-17716262">
        <id>Q9UPQ4-2</id>
    </interactant>
    <interactant intactId="EBI-11742836">
        <id>Q16656-4</id>
        <label>NRF1</label>
    </interactant>
    <organismsDiffer>false</organismsDiffer>
    <experiments>3</experiments>
</comment>
<comment type="interaction">
    <interactant intactId="EBI-17716262">
        <id>Q9UPQ4-2</id>
    </interactant>
    <interactant intactId="EBI-295391">
        <id>Q9BYG5</id>
        <label>PARD6B</label>
    </interactant>
    <organismsDiffer>false</organismsDiffer>
    <experiments>3</experiments>
</comment>
<comment type="interaction">
    <interactant intactId="EBI-17716262">
        <id>Q9UPQ4-2</id>
    </interactant>
    <interactant intactId="EBI-712290">
        <id>O14737</id>
        <label>PDCD5</label>
    </interactant>
    <organismsDiffer>false</organismsDiffer>
    <experiments>3</experiments>
</comment>
<comment type="interaction">
    <interactant intactId="EBI-17716262">
        <id>Q9UPQ4-2</id>
    </interactant>
    <interactant intactId="EBI-17717171">
        <id>Q9UPV7</id>
        <label>PHF24</label>
    </interactant>
    <organismsDiffer>false</organismsDiffer>
    <experiments>3</experiments>
</comment>
<comment type="interaction">
    <interactant intactId="EBI-17716262">
        <id>Q9UPQ4-2</id>
    </interactant>
    <interactant intactId="EBI-712311">
        <id>P67775</id>
        <label>PPP2CA</label>
    </interactant>
    <organismsDiffer>false</organismsDiffer>
    <experiments>3</experiments>
</comment>
<comment type="interaction">
    <interactant intactId="EBI-17716262">
        <id>Q9UPQ4-2</id>
    </interactant>
    <interactant intactId="EBI-1053424">
        <id>O43741</id>
        <label>PRKAB2</label>
    </interactant>
    <organismsDiffer>false</organismsDiffer>
    <experiments>3</experiments>
</comment>
<comment type="interaction">
    <interactant intactId="EBI-17716262">
        <id>Q9UPQ4-2</id>
    </interactant>
    <interactant intactId="EBI-21251460">
        <id>O60260-5</id>
        <label>PRKN</label>
    </interactant>
    <organismsDiffer>false</organismsDiffer>
    <experiments>3</experiments>
</comment>
<comment type="interaction">
    <interactant intactId="EBI-17716262">
        <id>Q9UPQ4-2</id>
    </interactant>
    <interactant intactId="EBI-12754095">
        <id>P86480</id>
        <label>PRR20D</label>
    </interactant>
    <organismsDiffer>false</organismsDiffer>
    <experiments>3</experiments>
</comment>
<comment type="interaction">
    <interactant intactId="EBI-17716262">
        <id>Q9UPQ4-2</id>
    </interactant>
    <interactant intactId="EBI-347462">
        <id>P47897</id>
        <label>QARS1</label>
    </interactant>
    <organismsDiffer>false</organismsDiffer>
    <experiments>4</experiments>
</comment>
<comment type="interaction">
    <interactant intactId="EBI-17716262">
        <id>Q9UPQ4-2</id>
    </interactant>
    <interactant intactId="EBI-396669">
        <id>Q9Y3C5</id>
        <label>RNF11</label>
    </interactant>
    <organismsDiffer>false</organismsDiffer>
    <experiments>3</experiments>
</comment>
<comment type="interaction">
    <interactant intactId="EBI-17716262">
        <id>Q9UPQ4-2</id>
    </interactant>
    <interactant intactId="EBI-79084">
        <id>Q92529</id>
        <label>SHC3</label>
    </interactant>
    <organismsDiffer>false</organismsDiffer>
    <experiments>3</experiments>
</comment>
<comment type="interaction">
    <interactant intactId="EBI-17716262">
        <id>Q9UPQ4-2</id>
    </interactant>
    <interactant intactId="EBI-358436">
        <id>Q12824-2</id>
        <label>SMARCB1</label>
    </interactant>
    <organismsDiffer>false</organismsDiffer>
    <experiments>3</experiments>
</comment>
<comment type="interaction">
    <interactant intactId="EBI-17716262">
        <id>Q9UPQ4-2</id>
    </interactant>
    <interactant intactId="EBI-5235340">
        <id>Q7Z699</id>
        <label>SPRED1</label>
    </interactant>
    <organismsDiffer>false</organismsDiffer>
    <experiments>3</experiments>
</comment>
<comment type="interaction">
    <interactant intactId="EBI-17716262">
        <id>Q9UPQ4-2</id>
    </interactant>
    <interactant intactId="EBI-11955057">
        <id>Q8N8B7-2</id>
        <label>TCEANC</label>
    </interactant>
    <organismsDiffer>false</organismsDiffer>
    <experiments>3</experiments>
</comment>
<comment type="interaction">
    <interactant intactId="EBI-17716262">
        <id>Q9UPQ4-2</id>
    </interactant>
    <interactant intactId="EBI-8451480">
        <id>O75865-2</id>
        <label>TRAPPC6A</label>
    </interactant>
    <organismsDiffer>false</organismsDiffer>
    <experiments>3</experiments>
</comment>
<comment type="interaction">
    <interactant intactId="EBI-17716262">
        <id>Q9UPQ4-2</id>
    </interactant>
    <interactant intactId="EBI-11981577">
        <id>Q9UDY6-2</id>
        <label>TRIM10</label>
    </interactant>
    <organismsDiffer>false</organismsDiffer>
    <experiments>3</experiments>
</comment>
<comment type="interaction">
    <interactant intactId="EBI-17716262">
        <id>Q9UPQ4-2</id>
    </interactant>
    <interactant intactId="EBI-3918381">
        <id>Q96PN8</id>
        <label>TSSK3</label>
    </interactant>
    <organismsDiffer>false</organismsDiffer>
    <experiments>3</experiments>
</comment>
<comment type="interaction">
    <interactant intactId="EBI-17716262">
        <id>Q9UPQ4-2</id>
    </interactant>
    <interactant intactId="EBI-473850">
        <id>P61086</id>
        <label>UBE2K</label>
    </interactant>
    <organismsDiffer>false</organismsDiffer>
    <experiments>6</experiments>
</comment>
<comment type="interaction">
    <interactant intactId="EBI-17716262">
        <id>Q9UPQ4-2</id>
    </interactant>
    <interactant intactId="EBI-741480">
        <id>Q9UMX0</id>
        <label>UBQLN1</label>
    </interactant>
    <organismsDiffer>false</organismsDiffer>
    <experiments>3</experiments>
</comment>
<comment type="interaction">
    <interactant intactId="EBI-17716262">
        <id>Q9UPQ4-2</id>
    </interactant>
    <interactant intactId="EBI-720609">
        <id>O76024</id>
        <label>WFS1</label>
    </interactant>
    <organismsDiffer>false</organismsDiffer>
    <experiments>3</experiments>
</comment>
<comment type="interaction">
    <interactant intactId="EBI-17716262">
        <id>Q9UPQ4-2</id>
    </interactant>
    <interactant intactId="EBI-11741890">
        <id>Q86VK4-3</id>
        <label>ZNF410</label>
    </interactant>
    <organismsDiffer>false</organismsDiffer>
    <experiments>3</experiments>
</comment>
<comment type="interaction">
    <interactant intactId="EBI-17716262">
        <id>Q9UPQ4-2</id>
    </interactant>
    <interactant intactId="EBI-25900580">
        <id>Q9Y649</id>
    </interactant>
    <organismsDiffer>false</organismsDiffer>
    <experiments>3</experiments>
</comment>
<comment type="subcellular location">
    <subcellularLocation>
        <location evidence="6">Cytoplasm</location>
    </subcellularLocation>
    <subcellularLocation>
        <location evidence="1">Nucleus</location>
    </subcellularLocation>
    <text evidence="1">Found predominantly in cytoplasm with a granular distribution. Found in punctuate nuclear bodies (By similarity).</text>
</comment>
<comment type="alternative products">
    <event type="alternative splicing"/>
    <isoform>
        <id>Q9UPQ4-1</id>
        <name>1</name>
        <sequence type="displayed"/>
    </isoform>
    <isoform>
        <id>Q9UPQ4-2</id>
        <name>2</name>
        <sequence type="described" ref="VSP_012061"/>
    </isoform>
</comment>
<comment type="induction">
    <text evidence="7">By TLR7 and TLR9 stimulation.</text>
</comment>
<comment type="domain">
    <text evidence="1">The RING finger domain and the coiled-coil region are required for the apoptosis-inducing activity.</text>
</comment>
<comment type="similarity">
    <text evidence="11">Belongs to the TRIM/RBCC family.</text>
</comment>
<comment type="sequence caution" evidence="11">
    <conflict type="erroneous initiation">
        <sequence resource="EMBL-CDS" id="BAA83050"/>
    </conflict>
</comment>
<reference key="1">
    <citation type="journal article" date="2004" name="J. Biol. Chem.">
        <title>HLS5, a novel RBCC (ring finger, B box, coiled-coil) family member isolated from a hemopoietic lineage switch, is a candidate tumor suppressor.</title>
        <authorList>
            <person name="Lalonde J.-P."/>
            <person name="Lim R."/>
            <person name="Ingley E."/>
            <person name="Tilbrook P.A."/>
            <person name="Thompson M.J."/>
            <person name="McCulloch R."/>
            <person name="Beaumont J.G."/>
            <person name="Wicking C."/>
            <person name="Eyre H.J."/>
            <person name="Sutherland G.R."/>
            <person name="Howe K."/>
            <person name="Solomon E."/>
            <person name="Williams J.H."/>
            <person name="Klinken S.P."/>
        </authorList>
    </citation>
    <scope>NUCLEOTIDE SEQUENCE [MRNA] (ISOFORM 1)</scope>
    <source>
        <tissue>Liver</tissue>
    </source>
</reference>
<reference key="2">
    <citation type="journal article" date="1999" name="DNA Res.">
        <title>Prediction of the coding sequences of unidentified human genes. XIV. The complete sequences of 100 new cDNA clones from brain which code for large proteins in vitro.</title>
        <authorList>
            <person name="Kikuno R."/>
            <person name="Nagase T."/>
            <person name="Ishikawa K."/>
            <person name="Hirosawa M."/>
            <person name="Miyajima N."/>
            <person name="Tanaka A."/>
            <person name="Kotani H."/>
            <person name="Nomura N."/>
            <person name="Ohara O."/>
        </authorList>
    </citation>
    <scope>NUCLEOTIDE SEQUENCE [LARGE SCALE MRNA] (ISOFORM 1)</scope>
    <source>
        <tissue>Brain</tissue>
    </source>
</reference>
<reference key="3">
    <citation type="journal article" date="2004" name="Genome Res.">
        <title>The status, quality, and expansion of the NIH full-length cDNA project: the Mammalian Gene Collection (MGC).</title>
        <authorList>
            <consortium name="The MGC Project Team"/>
        </authorList>
    </citation>
    <scope>NUCLEOTIDE SEQUENCE [LARGE SCALE MRNA] (ISOFORMS 1 AND 2)</scope>
    <source>
        <tissue>Brain</tissue>
        <tissue>Lung</tissue>
    </source>
</reference>
<reference key="4">
    <citation type="journal article" date="2011" name="Sci. Signal.">
        <title>System-wide temporal characterization of the proteome and phosphoproteome of human embryonic stem cell differentiation.</title>
        <authorList>
            <person name="Rigbolt K.T."/>
            <person name="Prokhorova T.A."/>
            <person name="Akimov V."/>
            <person name="Henningsen J."/>
            <person name="Johansen P.T."/>
            <person name="Kratchmarova I."/>
            <person name="Kassem M."/>
            <person name="Mann M."/>
            <person name="Olsen J.V."/>
            <person name="Blagoev B."/>
        </authorList>
    </citation>
    <scope>ACETYLATION [LARGE SCALE ANALYSIS] AT MET-1</scope>
    <scope>PHOSPHORYLATION [LARGE SCALE ANALYSIS] AT SER-4 AND SER-8</scope>
    <scope>IDENTIFICATION BY MASS SPECTROMETRY [LARGE SCALE ANALYSIS]</scope>
</reference>
<reference key="5">
    <citation type="journal article" date="2013" name="J. Proteome Res.">
        <title>Toward a comprehensive characterization of a human cancer cell phosphoproteome.</title>
        <authorList>
            <person name="Zhou H."/>
            <person name="Di Palma S."/>
            <person name="Preisinger C."/>
            <person name="Peng M."/>
            <person name="Polat A.N."/>
            <person name="Heck A.J."/>
            <person name="Mohammed S."/>
        </authorList>
    </citation>
    <scope>PHOSPHORYLATION [LARGE SCALE ANALYSIS] AT SER-4</scope>
    <scope>IDENTIFICATION BY MASS SPECTROMETRY [LARGE SCALE ANALYSIS]</scope>
    <source>
        <tissue>Erythroleukemia</tissue>
    </source>
</reference>
<reference key="6">
    <citation type="journal article" date="2015" name="Oncogene">
        <title>TRIM35 Interacts with pyruvate kinase isoform M2 to suppress the Warburg effect and tumorigenicity in hepatocellular carcinoma.</title>
        <authorList>
            <person name="Chen Z."/>
            <person name="Wang Z."/>
            <person name="Guo W."/>
            <person name="Zhang Z."/>
            <person name="Zhao F."/>
            <person name="Zhao Y."/>
            <person name="Jia D."/>
            <person name="Ding J."/>
            <person name="Wang H."/>
            <person name="Yao M."/>
            <person name="He X."/>
        </authorList>
    </citation>
    <scope>FUNCTION</scope>
    <scope>INTERACTION WITH PKM</scope>
    <scope>SUBCELLULAR LOCATION</scope>
</reference>
<reference key="7">
    <citation type="journal article" date="2015" name="FEBS Lett.">
        <title>TRIM35 negatively regulates TLR7- and TLR9-mediated type I interferon production by targeting IRF7.</title>
        <authorList>
            <person name="Wang Y."/>
            <person name="Yan S."/>
            <person name="Yang B."/>
            <person name="Wang Y."/>
            <person name="Zhou H."/>
            <person name="Lian Q."/>
            <person name="Sun B."/>
        </authorList>
    </citation>
    <scope>FUNCTION</scope>
    <scope>INDUCTION BY TLR5 AND TLR7</scope>
    <scope>INTERACTION WITH IRF7</scope>
</reference>
<reference key="8">
    <citation type="journal article" date="2020" name="Protein Cell">
        <title>TRIM35 mediates protection against influenza infection by activating TRAF3 and degrading viral PB2.</title>
        <authorList>
            <person name="Sun N."/>
            <person name="Jiang L."/>
            <person name="Ye M."/>
            <person name="Wang Y."/>
            <person name="Wang G."/>
            <person name="Wan X."/>
            <person name="Zhao Y."/>
            <person name="Wen X."/>
            <person name="Liang L."/>
            <person name="Ma S."/>
            <person name="Liu L."/>
            <person name="Bu Z."/>
            <person name="Chen H."/>
            <person name="Li C."/>
        </authorList>
    </citation>
    <scope>FUNCTION</scope>
    <scope>INTERACTION WITH TRAF3</scope>
</reference>
<proteinExistence type="evidence at protein level"/>